<reference key="1">
    <citation type="journal article" date="2005" name="Nature">
        <title>The genome of the social amoeba Dictyostelium discoideum.</title>
        <authorList>
            <person name="Eichinger L."/>
            <person name="Pachebat J.A."/>
            <person name="Gloeckner G."/>
            <person name="Rajandream M.A."/>
            <person name="Sucgang R."/>
            <person name="Berriman M."/>
            <person name="Song J."/>
            <person name="Olsen R."/>
            <person name="Szafranski K."/>
            <person name="Xu Q."/>
            <person name="Tunggal B."/>
            <person name="Kummerfeld S."/>
            <person name="Madera M."/>
            <person name="Konfortov B.A."/>
            <person name="Rivero F."/>
            <person name="Bankier A.T."/>
            <person name="Lehmann R."/>
            <person name="Hamlin N."/>
            <person name="Davies R."/>
            <person name="Gaudet P."/>
            <person name="Fey P."/>
            <person name="Pilcher K."/>
            <person name="Chen G."/>
            <person name="Saunders D."/>
            <person name="Sodergren E.J."/>
            <person name="Davis P."/>
            <person name="Kerhornou A."/>
            <person name="Nie X."/>
            <person name="Hall N."/>
            <person name="Anjard C."/>
            <person name="Hemphill L."/>
            <person name="Bason N."/>
            <person name="Farbrother P."/>
            <person name="Desany B."/>
            <person name="Just E."/>
            <person name="Morio T."/>
            <person name="Rost R."/>
            <person name="Churcher C.M."/>
            <person name="Cooper J."/>
            <person name="Haydock S."/>
            <person name="van Driessche N."/>
            <person name="Cronin A."/>
            <person name="Goodhead I."/>
            <person name="Muzny D.M."/>
            <person name="Mourier T."/>
            <person name="Pain A."/>
            <person name="Lu M."/>
            <person name="Harper D."/>
            <person name="Lindsay R."/>
            <person name="Hauser H."/>
            <person name="James K.D."/>
            <person name="Quiles M."/>
            <person name="Madan Babu M."/>
            <person name="Saito T."/>
            <person name="Buchrieser C."/>
            <person name="Wardroper A."/>
            <person name="Felder M."/>
            <person name="Thangavelu M."/>
            <person name="Johnson D."/>
            <person name="Knights A."/>
            <person name="Loulseged H."/>
            <person name="Mungall K.L."/>
            <person name="Oliver K."/>
            <person name="Price C."/>
            <person name="Quail M.A."/>
            <person name="Urushihara H."/>
            <person name="Hernandez J."/>
            <person name="Rabbinowitsch E."/>
            <person name="Steffen D."/>
            <person name="Sanders M."/>
            <person name="Ma J."/>
            <person name="Kohara Y."/>
            <person name="Sharp S."/>
            <person name="Simmonds M.N."/>
            <person name="Spiegler S."/>
            <person name="Tivey A."/>
            <person name="Sugano S."/>
            <person name="White B."/>
            <person name="Walker D."/>
            <person name="Woodward J.R."/>
            <person name="Winckler T."/>
            <person name="Tanaka Y."/>
            <person name="Shaulsky G."/>
            <person name="Schleicher M."/>
            <person name="Weinstock G.M."/>
            <person name="Rosenthal A."/>
            <person name="Cox E.C."/>
            <person name="Chisholm R.L."/>
            <person name="Gibbs R.A."/>
            <person name="Loomis W.F."/>
            <person name="Platzer M."/>
            <person name="Kay R.R."/>
            <person name="Williams J.G."/>
            <person name="Dear P.H."/>
            <person name="Noegel A.A."/>
            <person name="Barrell B.G."/>
            <person name="Kuspa A."/>
        </authorList>
    </citation>
    <scope>NUCLEOTIDE SEQUENCE [LARGE SCALE GENOMIC DNA]</scope>
    <source>
        <strain>AX4</strain>
    </source>
</reference>
<reference key="2">
    <citation type="journal article" date="2000" name="Eur. J. Biochem.">
        <title>Functional and molecular identification of novel members of the ubiquitous membrane fusion proteins alpha- and gamma-SNAP (soluble N-ethylmaleimide-sensitive factor-attachment proteins) families in Dictyostelium discoideum.</title>
        <authorList>
            <person name="Weidenhaupt M."/>
            <person name="Bruckert F."/>
            <person name="Louwagie M."/>
            <person name="Garin J."/>
            <person name="Satre M."/>
        </authorList>
    </citation>
    <scope>PROTEIN SEQUENCE OF 21-33 AND 252-259</scope>
    <scope>SUBCELLULAR LOCATION</scope>
    <scope>INTERACTION WITH NSFA</scope>
</reference>
<reference key="3">
    <citation type="journal article" date="2002" name="Biochem. J.">
        <title>Syntaxin 7, syntaxin 8, Vti1 and VAMP7 (vesicle-associated membrane protein 7) form an active SNARE complex for early macropinocytic compartment fusion in Dictyostelium discoideum.</title>
        <authorList>
            <person name="Bogdanovic A."/>
            <person name="Bennett N."/>
            <person name="Kieffer S."/>
            <person name="Louwagie M."/>
            <person name="Morio T."/>
            <person name="Garin J."/>
            <person name="Satre M."/>
            <person name="Bruckert F."/>
        </authorList>
    </citation>
    <scope>FUNCTION</scope>
    <scope>INTERACTION WITH SYN7A</scope>
    <scope>IDENTIFICATION BY MASS SPECTROMETRY</scope>
</reference>
<reference key="4">
    <citation type="journal article" date="2006" name="Mol. Cell. Proteomics">
        <title>Proteomics fingerprinting of phagosome maturation and evidence for the role of a Galpha during uptake.</title>
        <authorList>
            <person name="Gotthardt D."/>
            <person name="Blancheteau V."/>
            <person name="Bosserhoff A."/>
            <person name="Ruppert T."/>
            <person name="Delorenzi M."/>
            <person name="Soldati T."/>
        </authorList>
    </citation>
    <scope>IDENTIFICATION BY MASS SPECTROMETRY [LARGE SCALE ANALYSIS]</scope>
    <source>
        <strain>AX2</strain>
    </source>
</reference>
<sequence length="291" mass="32407">MGDDAKAKEFLDAADKRLRGGNFFKMFGGGSSRYDDAASDYTKAANLFKMSKKWDQAGAAFQKAAECFLKGSSKHDAASSYVLAAGCYKKGNVIDAITCLKAAIEYYTDEGRFAISAKHQKEIAELYEAEGDFDQAIASYQIASDYFDGENSTVSSHQCLLKIALFSAQLERYEKSIEIYEQVAAASLDNNLTQWGCKEYFLRACLCYLAADDVVGAERALQRYKDMQASFNSTRECRLLDGIIQACRNNNVEDFTNEVAEFNSISPLDSWKTSILLRIKNTINRETESVV</sequence>
<feature type="chain" id="PRO_0000327891" description="Alpha-soluble NSF attachment protein">
    <location>
        <begin position="1"/>
        <end position="291"/>
    </location>
</feature>
<feature type="repeat" description="TPR 1">
    <location>
        <begin position="14"/>
        <end position="51"/>
    </location>
</feature>
<feature type="repeat" description="TPR 2">
    <location>
        <begin position="77"/>
        <end position="110"/>
    </location>
</feature>
<feature type="repeat" description="TPR 3">
    <location>
        <begin position="117"/>
        <end position="150"/>
    </location>
</feature>
<feature type="repeat" description="TPR 4">
    <location>
        <begin position="157"/>
        <end position="190"/>
    </location>
</feature>
<proteinExistence type="evidence at protein level"/>
<evidence type="ECO:0000250" key="1"/>
<evidence type="ECO:0000269" key="2">
    <source>
    </source>
</evidence>
<evidence type="ECO:0000269" key="3">
    <source>
    </source>
</evidence>
<evidence type="ECO:0000305" key="4"/>
<accession>Q54NP6</accession>
<protein>
    <recommendedName>
        <fullName>Alpha-soluble NSF attachment protein</fullName>
        <shortName>SNAP-alpha</shortName>
    </recommendedName>
    <alternativeName>
        <fullName>N-ethylmaleimide-sensitive factor attachment protein alpha</fullName>
    </alternativeName>
</protein>
<gene>
    <name type="primary">snpA</name>
    <name type="ORF">DDB_G0285111</name>
</gene>
<organism>
    <name type="scientific">Dictyostelium discoideum</name>
    <name type="common">Social amoeba</name>
    <dbReference type="NCBI Taxonomy" id="44689"/>
    <lineage>
        <taxon>Eukaryota</taxon>
        <taxon>Amoebozoa</taxon>
        <taxon>Evosea</taxon>
        <taxon>Eumycetozoa</taxon>
        <taxon>Dictyostelia</taxon>
        <taxon>Dictyosteliales</taxon>
        <taxon>Dictyosteliaceae</taxon>
        <taxon>Dictyostelium</taxon>
    </lineage>
</organism>
<comment type="function">
    <text evidence="1 3">May be required for vesicular transport between the endoplasmic reticulum and the Golgi apparatus (By similarity). Involved in vesicle fusion with nsfA and probably SNARE proteins.</text>
</comment>
<comment type="subunit">
    <text evidence="2 3">Interacts with nsfA and probably SNARE proteins.</text>
</comment>
<comment type="interaction">
    <interactant intactId="EBI-1810173">
        <id>Q54NP6</id>
    </interactant>
    <interactant intactId="EBI-1810142">
        <id>Q75JI3</id>
        <label>nsfA</label>
    </interactant>
    <organismsDiffer>false</organismsDiffer>
    <experiments>2</experiments>
</comment>
<comment type="subcellular location">
    <subcellularLocation>
        <location evidence="2">Cytoplasmic vesicle membrane</location>
        <topology evidence="2">Peripheral membrane protein</topology>
    </subcellularLocation>
</comment>
<comment type="similarity">
    <text evidence="4">Belongs to the SNAP family.</text>
</comment>
<name>SNAA_DICDI</name>
<dbReference type="EMBL" id="AAFI02000074">
    <property type="protein sequence ID" value="EAL64868.1"/>
    <property type="molecule type" value="Genomic_DNA"/>
</dbReference>
<dbReference type="RefSeq" id="XP_639870.1">
    <property type="nucleotide sequence ID" value="XM_634778.1"/>
</dbReference>
<dbReference type="SMR" id="Q54NP6"/>
<dbReference type="FunCoup" id="Q54NP6">
    <property type="interactions" value="1018"/>
</dbReference>
<dbReference type="IntAct" id="Q54NP6">
    <property type="interactions" value="2"/>
</dbReference>
<dbReference type="STRING" id="44689.Q54NP6"/>
<dbReference type="PaxDb" id="44689-DDB0231538"/>
<dbReference type="EnsemblProtists" id="EAL64868">
    <property type="protein sequence ID" value="EAL64868"/>
    <property type="gene ID" value="DDB_G0285111"/>
</dbReference>
<dbReference type="GeneID" id="8624941"/>
<dbReference type="KEGG" id="ddi:DDB_G0285111"/>
<dbReference type="dictyBase" id="DDB_G0285111">
    <property type="gene designation" value="snpA"/>
</dbReference>
<dbReference type="VEuPathDB" id="AmoebaDB:DDB_G0285111"/>
<dbReference type="eggNOG" id="KOG1586">
    <property type="taxonomic scope" value="Eukaryota"/>
</dbReference>
<dbReference type="HOGENOM" id="CLU_046329_0_2_1"/>
<dbReference type="InParanoid" id="Q54NP6"/>
<dbReference type="OMA" id="WSVKEYL"/>
<dbReference type="PhylomeDB" id="Q54NP6"/>
<dbReference type="Reactome" id="R-DDI-204005">
    <property type="pathway name" value="COPII-mediated vesicle transport"/>
</dbReference>
<dbReference type="Reactome" id="R-DDI-6807878">
    <property type="pathway name" value="COPI-mediated anterograde transport"/>
</dbReference>
<dbReference type="Reactome" id="R-DDI-6811434">
    <property type="pathway name" value="COPI-dependent Golgi-to-ER retrograde traffic"/>
</dbReference>
<dbReference type="Reactome" id="R-DDI-6811438">
    <property type="pathway name" value="Intra-Golgi traffic"/>
</dbReference>
<dbReference type="Reactome" id="R-DDI-6811440">
    <property type="pathway name" value="Retrograde transport at the Trans-Golgi-Network"/>
</dbReference>
<dbReference type="PRO" id="PR:Q54NP6"/>
<dbReference type="Proteomes" id="UP000002195">
    <property type="component" value="Chromosome 4"/>
</dbReference>
<dbReference type="GO" id="GO:0030659">
    <property type="term" value="C:cytoplasmic vesicle membrane"/>
    <property type="evidence" value="ECO:0007669"/>
    <property type="project" value="UniProtKB-SubCell"/>
</dbReference>
<dbReference type="GO" id="GO:0045335">
    <property type="term" value="C:phagocytic vesicle"/>
    <property type="evidence" value="ECO:0007005"/>
    <property type="project" value="dictyBase"/>
</dbReference>
<dbReference type="GO" id="GO:0031201">
    <property type="term" value="C:SNARE complex"/>
    <property type="evidence" value="ECO:0000318"/>
    <property type="project" value="GO_Central"/>
</dbReference>
<dbReference type="GO" id="GO:0005483">
    <property type="term" value="F:soluble NSF attachment protein activity"/>
    <property type="evidence" value="ECO:0000314"/>
    <property type="project" value="dictyBase"/>
</dbReference>
<dbReference type="GO" id="GO:0019905">
    <property type="term" value="F:syntaxin binding"/>
    <property type="evidence" value="ECO:0000318"/>
    <property type="project" value="GO_Central"/>
</dbReference>
<dbReference type="GO" id="GO:0006886">
    <property type="term" value="P:intracellular protein transport"/>
    <property type="evidence" value="ECO:0000318"/>
    <property type="project" value="GO_Central"/>
</dbReference>
<dbReference type="GO" id="GO:0035494">
    <property type="term" value="P:SNARE complex disassembly"/>
    <property type="evidence" value="ECO:0000318"/>
    <property type="project" value="GO_Central"/>
</dbReference>
<dbReference type="CDD" id="cd15832">
    <property type="entry name" value="SNAP"/>
    <property type="match status" value="1"/>
</dbReference>
<dbReference type="FunFam" id="1.25.40.10:FF:000049">
    <property type="entry name" value="Alpha-soluble NSF attachment protein-like"/>
    <property type="match status" value="1"/>
</dbReference>
<dbReference type="Gene3D" id="1.25.40.10">
    <property type="entry name" value="Tetratricopeptide repeat domain"/>
    <property type="match status" value="1"/>
</dbReference>
<dbReference type="InterPro" id="IPR000744">
    <property type="entry name" value="NSF_attach"/>
</dbReference>
<dbReference type="InterPro" id="IPR011990">
    <property type="entry name" value="TPR-like_helical_dom_sf"/>
</dbReference>
<dbReference type="InterPro" id="IPR019734">
    <property type="entry name" value="TPR_rpt"/>
</dbReference>
<dbReference type="PANTHER" id="PTHR13768:SF8">
    <property type="entry name" value="ALPHA-SOLUBLE NSF ATTACHMENT PROTEIN"/>
    <property type="match status" value="1"/>
</dbReference>
<dbReference type="PANTHER" id="PTHR13768">
    <property type="entry name" value="SOLUBLE NSF ATTACHMENT PROTEIN SNAP"/>
    <property type="match status" value="1"/>
</dbReference>
<dbReference type="Pfam" id="PF14938">
    <property type="entry name" value="SNAP"/>
    <property type="match status" value="1"/>
</dbReference>
<dbReference type="PRINTS" id="PR00448">
    <property type="entry name" value="NSFATTACHMNT"/>
</dbReference>
<dbReference type="SMART" id="SM00028">
    <property type="entry name" value="TPR"/>
    <property type="match status" value="4"/>
</dbReference>
<dbReference type="SUPFAM" id="SSF48452">
    <property type="entry name" value="TPR-like"/>
    <property type="match status" value="1"/>
</dbReference>
<keyword id="KW-0968">Cytoplasmic vesicle</keyword>
<keyword id="KW-0903">Direct protein sequencing</keyword>
<keyword id="KW-0931">ER-Golgi transport</keyword>
<keyword id="KW-0472">Membrane</keyword>
<keyword id="KW-0653">Protein transport</keyword>
<keyword id="KW-1185">Reference proteome</keyword>
<keyword id="KW-0677">Repeat</keyword>
<keyword id="KW-0802">TPR repeat</keyword>
<keyword id="KW-0813">Transport</keyword>